<name>FMO4_RAT</name>
<organism>
    <name type="scientific">Rattus norvegicus</name>
    <name type="common">Rat</name>
    <dbReference type="NCBI Taxonomy" id="10116"/>
    <lineage>
        <taxon>Eukaryota</taxon>
        <taxon>Metazoa</taxon>
        <taxon>Chordata</taxon>
        <taxon>Craniata</taxon>
        <taxon>Vertebrata</taxon>
        <taxon>Euteleostomi</taxon>
        <taxon>Mammalia</taxon>
        <taxon>Eutheria</taxon>
        <taxon>Euarchontoglires</taxon>
        <taxon>Glires</taxon>
        <taxon>Rodentia</taxon>
        <taxon>Myomorpha</taxon>
        <taxon>Muroidea</taxon>
        <taxon>Muridae</taxon>
        <taxon>Murinae</taxon>
        <taxon>Rattus</taxon>
    </lineage>
</organism>
<protein>
    <recommendedName>
        <fullName>Dimethylaniline monooxygenase [N-oxide-forming] 4</fullName>
        <ecNumber>1.14.13.8</ecNumber>
    </recommendedName>
    <alternativeName>
        <fullName>Dimethylaniline oxidase 4</fullName>
    </alternativeName>
    <alternativeName>
        <fullName>Hepatic flavin-containing monooxygenase 4</fullName>
        <shortName>FMO 4</shortName>
    </alternativeName>
</protein>
<keyword id="KW-0256">Endoplasmic reticulum</keyword>
<keyword id="KW-0274">FAD</keyword>
<keyword id="KW-0285">Flavoprotein</keyword>
<keyword id="KW-0472">Membrane</keyword>
<keyword id="KW-0492">Microsome</keyword>
<keyword id="KW-0503">Monooxygenase</keyword>
<keyword id="KW-0521">NADP</keyword>
<keyword id="KW-0560">Oxidoreductase</keyword>
<keyword id="KW-1185">Reference proteome</keyword>
<keyword id="KW-0812">Transmembrane</keyword>
<keyword id="KW-1133">Transmembrane helix</keyword>
<feature type="chain" id="PRO_0000147663" description="Dimethylaniline monooxygenase [N-oxide-forming] 4">
    <location>
        <begin position="1"/>
        <end position="560"/>
    </location>
</feature>
<feature type="transmembrane region" description="Helical" evidence="3">
    <location>
        <begin position="519"/>
        <end position="539"/>
    </location>
</feature>
<feature type="binding site" evidence="2">
    <location>
        <begin position="9"/>
        <end position="13"/>
    </location>
    <ligand>
        <name>FAD</name>
        <dbReference type="ChEBI" id="CHEBI:57692"/>
    </ligand>
</feature>
<feature type="binding site" evidence="2">
    <location>
        <position position="32"/>
    </location>
    <ligand>
        <name>FAD</name>
        <dbReference type="ChEBI" id="CHEBI:57692"/>
    </ligand>
</feature>
<feature type="binding site" evidence="2">
    <location>
        <begin position="40"/>
        <end position="41"/>
    </location>
    <ligand>
        <name>FAD</name>
        <dbReference type="ChEBI" id="CHEBI:57692"/>
    </ligand>
</feature>
<feature type="binding site" evidence="2">
    <location>
        <begin position="60"/>
        <end position="61"/>
    </location>
    <ligand>
        <name>NADP(+)</name>
        <dbReference type="ChEBI" id="CHEBI:58349"/>
    </ligand>
</feature>
<feature type="binding site" evidence="2">
    <location>
        <begin position="195"/>
        <end position="198"/>
    </location>
    <ligand>
        <name>NADP(+)</name>
        <dbReference type="ChEBI" id="CHEBI:58349"/>
    </ligand>
</feature>
<feature type="sequence conflict" description="In Ref. 1; AAM46764." evidence="5" ref="1">
    <original>Q</original>
    <variation>R</variation>
    <location>
        <position position="244"/>
    </location>
</feature>
<sequence length="560" mass="63660">MAKKVAVIGAGVSGLSSIKCCLDENLEPTCFERSSDFGGLWKFAEASEDGMTRVYRSLVTNVCKEMSCYSDFPFHEDYPNFMSHEKFWDYLREFAEHFGLLKYIRFKTTVRSVTKRPDFSETGQWEVVTETEGKQDRAVFDAVMVCTGQFLSPRLPLESFPGIHKFKGQILHSQEYRIPDAFRGKRILVVGLGNTGGDVAVELSGIAAQVFLSTRTGAWVRSRSSVGGYPLNMMQTRWRNFLAQVLPSRFVSWNQERQMNKIFNHENYGLSIAKGKKPKFIVNDELPTCILCGKITMKTSVKDFTESSIVFEDGTIEANIDVVIFTTGYEFSFPFFEEPLKSLCTKKVILYKRVFPPNLERSTLAIIGLISLTGSILVGTEFQARWATRVFKGLCNIPPSQKLMAEAIKKEELIKRGVIKDTSQDKLDFISYMDELTQCIGAKPNIPLLFLKDPRLAWEVFFGPCTPYQYRLMGPGRWDGARNAILTQWDRTVKPLKTRTVPKSQEPASLSRYLKTWGAPVLIVSLLLIYKSSLFLELVQSKLQGRFSPSRILWYIPQNS</sequence>
<dbReference type="EC" id="1.14.13.8"/>
<dbReference type="EMBL" id="AF458416">
    <property type="protein sequence ID" value="AAM46764.1"/>
    <property type="molecule type" value="mRNA"/>
</dbReference>
<dbReference type="EMBL" id="BC081721">
    <property type="protein sequence ID" value="AAH81721.1"/>
    <property type="molecule type" value="mRNA"/>
</dbReference>
<dbReference type="RefSeq" id="NP_653147.2">
    <property type="nucleotide sequence ID" value="NM_144561.3"/>
</dbReference>
<dbReference type="RefSeq" id="XP_006250206.1">
    <property type="nucleotide sequence ID" value="XM_006250144.3"/>
</dbReference>
<dbReference type="SMR" id="Q8K4B7"/>
<dbReference type="FunCoup" id="Q8K4B7">
    <property type="interactions" value="182"/>
</dbReference>
<dbReference type="STRING" id="10116.ENSRNOP00000004599"/>
<dbReference type="iPTMnet" id="Q8K4B7"/>
<dbReference type="PhosphoSitePlus" id="Q8K4B7"/>
<dbReference type="PaxDb" id="10116-ENSRNOP00000004599"/>
<dbReference type="Ensembl" id="ENSRNOT00000004599.6">
    <property type="protein sequence ID" value="ENSRNOP00000004599.2"/>
    <property type="gene ID" value="ENSRNOG00000003400.8"/>
</dbReference>
<dbReference type="GeneID" id="246247"/>
<dbReference type="KEGG" id="rno:246247"/>
<dbReference type="UCSC" id="RGD:628601">
    <property type="organism name" value="rat"/>
</dbReference>
<dbReference type="AGR" id="RGD:628601"/>
<dbReference type="CTD" id="2329"/>
<dbReference type="RGD" id="628601">
    <property type="gene designation" value="Fmo4"/>
</dbReference>
<dbReference type="eggNOG" id="KOG1399">
    <property type="taxonomic scope" value="Eukaryota"/>
</dbReference>
<dbReference type="GeneTree" id="ENSGT00940000160256"/>
<dbReference type="InParanoid" id="Q8K4B7"/>
<dbReference type="OMA" id="HYLKVWG"/>
<dbReference type="PhylomeDB" id="Q8K4B7"/>
<dbReference type="TreeFam" id="TF105285"/>
<dbReference type="BRENDA" id="1.14.13.8">
    <property type="organism ID" value="5301"/>
</dbReference>
<dbReference type="SABIO-RK" id="Q8K4B7"/>
<dbReference type="PRO" id="PR:Q8K4B7"/>
<dbReference type="Proteomes" id="UP000002494">
    <property type="component" value="Chromosome 13"/>
</dbReference>
<dbReference type="Bgee" id="ENSRNOG00000003400">
    <property type="expression patterns" value="Expressed in kidney and 19 other cell types or tissues"/>
</dbReference>
<dbReference type="ExpressionAtlas" id="Q8K4B7">
    <property type="expression patterns" value="baseline and differential"/>
</dbReference>
<dbReference type="GO" id="GO:0005789">
    <property type="term" value="C:endoplasmic reticulum membrane"/>
    <property type="evidence" value="ECO:0007669"/>
    <property type="project" value="UniProtKB-SubCell"/>
</dbReference>
<dbReference type="GO" id="GO:0050660">
    <property type="term" value="F:flavin adenine dinucleotide binding"/>
    <property type="evidence" value="ECO:0007669"/>
    <property type="project" value="InterPro"/>
</dbReference>
<dbReference type="GO" id="GO:0004497">
    <property type="term" value="F:monooxygenase activity"/>
    <property type="evidence" value="ECO:0000303"/>
    <property type="project" value="RGD"/>
</dbReference>
<dbReference type="GO" id="GO:0004499">
    <property type="term" value="F:N,N-dimethylaniline monooxygenase activity"/>
    <property type="evidence" value="ECO:0000318"/>
    <property type="project" value="GO_Central"/>
</dbReference>
<dbReference type="GO" id="GO:0050661">
    <property type="term" value="F:NADP binding"/>
    <property type="evidence" value="ECO:0007669"/>
    <property type="project" value="InterPro"/>
</dbReference>
<dbReference type="GO" id="GO:0097009">
    <property type="term" value="P:energy homeostasis"/>
    <property type="evidence" value="ECO:0000266"/>
    <property type="project" value="RGD"/>
</dbReference>
<dbReference type="GO" id="GO:0046322">
    <property type="term" value="P:negative regulation of fatty acid oxidation"/>
    <property type="evidence" value="ECO:0000266"/>
    <property type="project" value="RGD"/>
</dbReference>
<dbReference type="GO" id="GO:0042178">
    <property type="term" value="P:xenobiotic catabolic process"/>
    <property type="evidence" value="ECO:0000266"/>
    <property type="project" value="RGD"/>
</dbReference>
<dbReference type="FunFam" id="3.50.50.60:FF:000023">
    <property type="entry name" value="Dimethylaniline monooxygenase [N-oxide-forming]"/>
    <property type="match status" value="1"/>
</dbReference>
<dbReference type="FunFam" id="3.50.50.60:FF:000042">
    <property type="entry name" value="Dimethylaniline monooxygenase [N-oxide-forming]"/>
    <property type="match status" value="1"/>
</dbReference>
<dbReference type="FunFam" id="3.50.50.60:FF:000073">
    <property type="entry name" value="Dimethylaniline monooxygenase [N-oxide-forming]"/>
    <property type="match status" value="1"/>
</dbReference>
<dbReference type="FunFam" id="3.50.50.60:FF:000183">
    <property type="entry name" value="Dimethylaniline monooxygenase [N-oxide-forming]"/>
    <property type="match status" value="1"/>
</dbReference>
<dbReference type="Gene3D" id="3.50.50.60">
    <property type="entry name" value="FAD/NAD(P)-binding domain"/>
    <property type="match status" value="1"/>
</dbReference>
<dbReference type="InterPro" id="IPR036188">
    <property type="entry name" value="FAD/NAD-bd_sf"/>
</dbReference>
<dbReference type="InterPro" id="IPR000960">
    <property type="entry name" value="Flavin_mOase"/>
</dbReference>
<dbReference type="InterPro" id="IPR020946">
    <property type="entry name" value="Flavin_mOase-like"/>
</dbReference>
<dbReference type="InterPro" id="IPR002256">
    <property type="entry name" value="Flavin_mOase_4"/>
</dbReference>
<dbReference type="InterPro" id="IPR050346">
    <property type="entry name" value="FMO-like"/>
</dbReference>
<dbReference type="PANTHER" id="PTHR23023">
    <property type="entry name" value="DIMETHYLANILINE MONOOXYGENASE"/>
    <property type="match status" value="1"/>
</dbReference>
<dbReference type="Pfam" id="PF00743">
    <property type="entry name" value="FMO-like"/>
    <property type="match status" value="1"/>
</dbReference>
<dbReference type="PIRSF" id="PIRSF000332">
    <property type="entry name" value="FMO"/>
    <property type="match status" value="1"/>
</dbReference>
<dbReference type="PRINTS" id="PR00370">
    <property type="entry name" value="FMOXYGENASE"/>
</dbReference>
<dbReference type="PRINTS" id="PR01124">
    <property type="entry name" value="FMOXYGENASE4"/>
</dbReference>
<dbReference type="SUPFAM" id="SSF51905">
    <property type="entry name" value="FAD/NAD(P)-binding domain"/>
    <property type="match status" value="2"/>
</dbReference>
<gene>
    <name type="primary">Fmo4</name>
</gene>
<evidence type="ECO:0000250" key="1"/>
<evidence type="ECO:0000250" key="2">
    <source>
        <dbReference type="UniProtKB" id="Q9HFE4"/>
    </source>
</evidence>
<evidence type="ECO:0000255" key="3"/>
<evidence type="ECO:0000269" key="4">
    <source>
    </source>
</evidence>
<evidence type="ECO:0000305" key="5"/>
<evidence type="ECO:0000305" key="6">
    <source>
    </source>
</evidence>
<comment type="function">
    <text evidence="1">This protein is involved in the oxidative metabolism of a variety of xenobiotics such as drugs and pesticides.</text>
</comment>
<comment type="catalytic activity">
    <reaction>
        <text>N,N-dimethylaniline + NADPH + O2 + H(+) = N,N-dimethylaniline N-oxide + NADP(+) + H2O</text>
        <dbReference type="Rhea" id="RHEA:24468"/>
        <dbReference type="ChEBI" id="CHEBI:15377"/>
        <dbReference type="ChEBI" id="CHEBI:15378"/>
        <dbReference type="ChEBI" id="CHEBI:15379"/>
        <dbReference type="ChEBI" id="CHEBI:16269"/>
        <dbReference type="ChEBI" id="CHEBI:17735"/>
        <dbReference type="ChEBI" id="CHEBI:57783"/>
        <dbReference type="ChEBI" id="CHEBI:58349"/>
        <dbReference type="EC" id="1.14.13.8"/>
    </reaction>
</comment>
<comment type="cofactor">
    <cofactor evidence="1">
        <name>FAD</name>
        <dbReference type="ChEBI" id="CHEBI:57692"/>
    </cofactor>
</comment>
<comment type="subcellular location">
    <subcellularLocation>
        <location evidence="4">Microsome membrane</location>
        <topology evidence="3">Single-pass membrane protein</topology>
    </subcellularLocation>
    <subcellularLocation>
        <location evidence="6">Endoplasmic reticulum membrane</location>
        <topology evidence="3">Single-pass membrane protein</topology>
    </subcellularLocation>
</comment>
<comment type="tissue specificity">
    <text evidence="4">Detected in liver and kidney (at protein level).</text>
</comment>
<comment type="similarity">
    <text evidence="5">Belongs to the FMO family.</text>
</comment>
<reference key="1">
    <citation type="submission" date="2001-12" db="EMBL/GenBank/DDBJ databases">
        <title>Cloning, sequencing and tissue distribution of rat flavin-containing monooxygenase 4. Two different FMO4 are produced by tissue specific alternative splicing.</title>
        <authorList>
            <person name="Lattard V."/>
            <person name="Longin-Sauvageon C."/>
            <person name="Benoit E."/>
        </authorList>
    </citation>
    <scope>NUCLEOTIDE SEQUENCE [MRNA]</scope>
    <source>
        <strain>Sprague-Dawley</strain>
    </source>
</reference>
<reference key="2">
    <citation type="journal article" date="2004" name="Genome Res.">
        <title>The status, quality, and expansion of the NIH full-length cDNA project: the Mammalian Gene Collection (MGC).</title>
        <authorList>
            <consortium name="The MGC Project Team"/>
        </authorList>
    </citation>
    <scope>NUCLEOTIDE SEQUENCE [LARGE SCALE MRNA]</scope>
    <source>
        <tissue>Kidney</tissue>
    </source>
</reference>
<reference key="3">
    <citation type="journal article" date="2009" name="J. Pharmacol. Exp. Ther.">
        <title>Differential localization of flavin-containing monooxygenase (FMO) isoforms 1, 3, and 4 in rat liver and kidney and evidence for expression of FMO4 in mouse, rat, and human liver and kidney microsomes.</title>
        <authorList>
            <person name="Novick R.M."/>
            <person name="Mitzey A.M."/>
            <person name="Brownfield M.S."/>
            <person name="Elfarra A.A."/>
        </authorList>
    </citation>
    <scope>SUBCELLULAR LOCATION</scope>
    <scope>TISSUE SPECIFICITY</scope>
</reference>
<accession>Q8K4B7</accession>
<accession>Q66HR6</accession>
<proteinExistence type="evidence at protein level"/>